<geneLocation type="plasmid">
    <name>IncQ RSF1010</name>
</geneLocation>
<proteinExistence type="predicted"/>
<name>YPMC_ECOLX</name>
<accession>P07115</accession>
<reference key="1">
    <citation type="journal article" date="1987" name="Mol. Gen. Genet.">
        <title>Mobilization of the non-conjugative plasmid RSF1010: a genetic and DNA sequence analysis of the mobilization region.</title>
        <authorList>
            <person name="Derbyshire K.M."/>
            <person name="Hatfull G."/>
            <person name="Willetts N."/>
        </authorList>
    </citation>
    <scope>NUCLEOTIDE SEQUENCE [GENOMIC DNA]</scope>
</reference>
<dbReference type="EMBL" id="X04830">
    <property type="protein sequence ID" value="CAA28522.1"/>
    <property type="molecule type" value="Genomic_DNA"/>
</dbReference>
<dbReference type="PIR" id="S10918">
    <property type="entry name" value="S10918"/>
</dbReference>
<sequence>MEASITVSHSFQCHPRDALRALCAALLTSAATSRNSLASSTHAAPVWRWAFSHSAACASLACWVWLMTCRASSASVAMLWASGSICSANSLMPLDFFTLSIAFMVYCLPVFL</sequence>
<protein>
    <recommendedName>
        <fullName>Uncharacterized mobilization operon protein C</fullName>
    </recommendedName>
</protein>
<keyword id="KW-0614">Plasmid</keyword>
<organism>
    <name type="scientific">Escherichia coli</name>
    <dbReference type="NCBI Taxonomy" id="562"/>
    <lineage>
        <taxon>Bacteria</taxon>
        <taxon>Pseudomonadati</taxon>
        <taxon>Pseudomonadota</taxon>
        <taxon>Gammaproteobacteria</taxon>
        <taxon>Enterobacterales</taxon>
        <taxon>Enterobacteriaceae</taxon>
        <taxon>Escherichia</taxon>
    </lineage>
</organism>
<feature type="chain" id="PRO_0000068512" description="Uncharacterized mobilization operon protein C">
    <location>
        <begin position="1"/>
        <end position="112"/>
    </location>
</feature>